<evidence type="ECO:0000255" key="1">
    <source>
        <dbReference type="HAMAP-Rule" id="MF_00049"/>
    </source>
</evidence>
<sequence>MQYPFQEVESFWQKFWEEHKSFQTNIRSSKPKFYCLDMFPYPSGAGLHVGHPEGYTATDILSRFKRMKGFEVLHPMGWDAFGLPAERYAMQTGIHPAITTKDNIDNFRRQIQMIGLSYDWSRELSTTDPDYYKFTQWIFIQLYQSWFNPELKKAESINELIRRFSNQGSNGLDYRQFNSEEWKNFSPVEKEKILSDFRLVYQAEIPVNWCEALGTVLANEEVEEWVGKGYEVVRKPMRQYMMRITAYADRLLEDLELVEWPPSTLEMQKNWIGKSEGLEITFPFLKPLQSGLEGIRIFTTRPDTIFGVTYMVVAPEHPIVSEITTPEQKQKVEEYQKTSSLKSDLDRMELNKEKTGVFTGTFVFNPADPSQKIPVWISDYVLYGYGTGAIMAVPAHDQRDFEFARTFGLKIIPVIEGEISEAAFDSKTSTCINSSSSEISINGLDYTSASSKIISWAESKKIGRKKIQFKLRDWLFARQRYWGEPIPLVHYPSGVTKPIPESELPLVLPNLEEFKPSGTGESPLALAKDWLQYKDPSTGEIGTRETNTMPQWAGSCWYYLRYIDPKNGRFLCDPELEKKWMPVNLYVGGSEHAVLHLLYSRFWHKFLFDIGAVSTKEPFDKLIHQGLILGEDKRKMSKSLGNVVNPDDVIKEYGADSLRLFEMFMGPLEMVKPWSTRGVEGVFRFLNRIWRLFHSGSQESFRLDDVEPTPEELKILHKTIQKVNEDIPNFSFNTAIAQLMIFVNEFTPSDRRPKKVLESFILLLAPFAPHIAEELWKRSGKMESLSYEKFPEADPQYLIESEILIVVQVNGKLRDEFKAPKDVSQSDAISMAKNLDKIKGILEGKTIRKEIYVPGKLVNLVIG</sequence>
<dbReference type="EC" id="6.1.1.4" evidence="1"/>
<dbReference type="EMBL" id="AE010300">
    <property type="protein sequence ID" value="AAN50912.2"/>
    <property type="molecule type" value="Genomic_DNA"/>
</dbReference>
<dbReference type="RefSeq" id="NP_713894.2">
    <property type="nucleotide sequence ID" value="NC_004342.2"/>
</dbReference>
<dbReference type="RefSeq" id="WP_001199945.1">
    <property type="nucleotide sequence ID" value="NC_004342.2"/>
</dbReference>
<dbReference type="SMR" id="Q8EZY7"/>
<dbReference type="FunCoup" id="Q8EZY7">
    <property type="interactions" value="525"/>
</dbReference>
<dbReference type="STRING" id="189518.LA_3714"/>
<dbReference type="PaxDb" id="189518-LA_3714"/>
<dbReference type="EnsemblBacteria" id="AAN50912">
    <property type="protein sequence ID" value="AAN50912"/>
    <property type="gene ID" value="LA_3714"/>
</dbReference>
<dbReference type="KEGG" id="lil:LA_3714"/>
<dbReference type="PATRIC" id="fig|189518.3.peg.3690"/>
<dbReference type="HOGENOM" id="CLU_004427_0_0_12"/>
<dbReference type="InParanoid" id="Q8EZY7"/>
<dbReference type="OrthoDB" id="9810365at2"/>
<dbReference type="Proteomes" id="UP000001408">
    <property type="component" value="Chromosome I"/>
</dbReference>
<dbReference type="GO" id="GO:0005829">
    <property type="term" value="C:cytosol"/>
    <property type="evidence" value="ECO:0000318"/>
    <property type="project" value="GO_Central"/>
</dbReference>
<dbReference type="GO" id="GO:0002161">
    <property type="term" value="F:aminoacyl-tRNA deacylase activity"/>
    <property type="evidence" value="ECO:0007669"/>
    <property type="project" value="InterPro"/>
</dbReference>
<dbReference type="GO" id="GO:0005524">
    <property type="term" value="F:ATP binding"/>
    <property type="evidence" value="ECO:0007669"/>
    <property type="project" value="UniProtKB-UniRule"/>
</dbReference>
<dbReference type="GO" id="GO:0004823">
    <property type="term" value="F:leucine-tRNA ligase activity"/>
    <property type="evidence" value="ECO:0000318"/>
    <property type="project" value="GO_Central"/>
</dbReference>
<dbReference type="GO" id="GO:0006429">
    <property type="term" value="P:leucyl-tRNA aminoacylation"/>
    <property type="evidence" value="ECO:0000318"/>
    <property type="project" value="GO_Central"/>
</dbReference>
<dbReference type="CDD" id="cd07958">
    <property type="entry name" value="Anticodon_Ia_Leu_BEm"/>
    <property type="match status" value="1"/>
</dbReference>
<dbReference type="CDD" id="cd00812">
    <property type="entry name" value="LeuRS_core"/>
    <property type="match status" value="1"/>
</dbReference>
<dbReference type="FunFam" id="1.10.730.10:FF:000012">
    <property type="entry name" value="Leucine--tRNA ligase"/>
    <property type="match status" value="1"/>
</dbReference>
<dbReference type="FunFam" id="3.10.20.590:FF:000001">
    <property type="entry name" value="Leucine--tRNA ligase"/>
    <property type="match status" value="1"/>
</dbReference>
<dbReference type="FunFam" id="3.40.50.620:FF:000056">
    <property type="entry name" value="Leucine--tRNA ligase"/>
    <property type="match status" value="1"/>
</dbReference>
<dbReference type="FunFam" id="3.40.50.620:FF:000060">
    <property type="entry name" value="Leucine--tRNA ligase"/>
    <property type="match status" value="1"/>
</dbReference>
<dbReference type="FunFam" id="1.10.730.10:FF:000011">
    <property type="entry name" value="Leucine--tRNA ligase chloroplastic/mitochondrial"/>
    <property type="match status" value="1"/>
</dbReference>
<dbReference type="Gene3D" id="3.10.20.590">
    <property type="match status" value="1"/>
</dbReference>
<dbReference type="Gene3D" id="3.40.50.620">
    <property type="entry name" value="HUPs"/>
    <property type="match status" value="3"/>
</dbReference>
<dbReference type="Gene3D" id="1.10.730.10">
    <property type="entry name" value="Isoleucyl-tRNA Synthetase, Domain 1"/>
    <property type="match status" value="1"/>
</dbReference>
<dbReference type="HAMAP" id="MF_00049_B">
    <property type="entry name" value="Leu_tRNA_synth_B"/>
    <property type="match status" value="1"/>
</dbReference>
<dbReference type="InterPro" id="IPR001412">
    <property type="entry name" value="aa-tRNA-synth_I_CS"/>
</dbReference>
<dbReference type="InterPro" id="IPR002300">
    <property type="entry name" value="aa-tRNA-synth_Ia"/>
</dbReference>
<dbReference type="InterPro" id="IPR002302">
    <property type="entry name" value="Leu-tRNA-ligase"/>
</dbReference>
<dbReference type="InterPro" id="IPR025709">
    <property type="entry name" value="Leu_tRNA-synth_edit"/>
</dbReference>
<dbReference type="InterPro" id="IPR013155">
    <property type="entry name" value="M/V/L/I-tRNA-synth_anticd-bd"/>
</dbReference>
<dbReference type="InterPro" id="IPR014729">
    <property type="entry name" value="Rossmann-like_a/b/a_fold"/>
</dbReference>
<dbReference type="InterPro" id="IPR009080">
    <property type="entry name" value="tRNAsynth_Ia_anticodon-bd"/>
</dbReference>
<dbReference type="InterPro" id="IPR009008">
    <property type="entry name" value="Val/Leu/Ile-tRNA-synth_edit"/>
</dbReference>
<dbReference type="NCBIfam" id="TIGR00396">
    <property type="entry name" value="leuS_bact"/>
    <property type="match status" value="1"/>
</dbReference>
<dbReference type="PANTHER" id="PTHR43740:SF2">
    <property type="entry name" value="LEUCINE--TRNA LIGASE, MITOCHONDRIAL"/>
    <property type="match status" value="1"/>
</dbReference>
<dbReference type="PANTHER" id="PTHR43740">
    <property type="entry name" value="LEUCYL-TRNA SYNTHETASE"/>
    <property type="match status" value="1"/>
</dbReference>
<dbReference type="Pfam" id="PF08264">
    <property type="entry name" value="Anticodon_1"/>
    <property type="match status" value="1"/>
</dbReference>
<dbReference type="Pfam" id="PF00133">
    <property type="entry name" value="tRNA-synt_1"/>
    <property type="match status" value="2"/>
</dbReference>
<dbReference type="Pfam" id="PF13603">
    <property type="entry name" value="tRNA-synt_1_2"/>
    <property type="match status" value="1"/>
</dbReference>
<dbReference type="PRINTS" id="PR00985">
    <property type="entry name" value="TRNASYNTHLEU"/>
</dbReference>
<dbReference type="SUPFAM" id="SSF47323">
    <property type="entry name" value="Anticodon-binding domain of a subclass of class I aminoacyl-tRNA synthetases"/>
    <property type="match status" value="1"/>
</dbReference>
<dbReference type="SUPFAM" id="SSF52374">
    <property type="entry name" value="Nucleotidylyl transferase"/>
    <property type="match status" value="1"/>
</dbReference>
<dbReference type="SUPFAM" id="SSF50677">
    <property type="entry name" value="ValRS/IleRS/LeuRS editing domain"/>
    <property type="match status" value="1"/>
</dbReference>
<dbReference type="PROSITE" id="PS00178">
    <property type="entry name" value="AA_TRNA_LIGASE_I"/>
    <property type="match status" value="1"/>
</dbReference>
<protein>
    <recommendedName>
        <fullName evidence="1">Leucine--tRNA ligase</fullName>
        <ecNumber evidence="1">6.1.1.4</ecNumber>
    </recommendedName>
    <alternativeName>
        <fullName evidence="1">Leucyl-tRNA synthetase</fullName>
        <shortName evidence="1">LeuRS</shortName>
    </alternativeName>
</protein>
<gene>
    <name evidence="1" type="primary">leuS</name>
    <name type="ordered locus">LA_3714</name>
</gene>
<feature type="chain" id="PRO_0000152036" description="Leucine--tRNA ligase">
    <location>
        <begin position="1"/>
        <end position="863"/>
    </location>
</feature>
<feature type="short sequence motif" description="'HIGH' region">
    <location>
        <begin position="40"/>
        <end position="51"/>
    </location>
</feature>
<feature type="short sequence motif" description="'KMSKS' region">
    <location>
        <begin position="635"/>
        <end position="639"/>
    </location>
</feature>
<feature type="binding site" evidence="1">
    <location>
        <position position="638"/>
    </location>
    <ligand>
        <name>ATP</name>
        <dbReference type="ChEBI" id="CHEBI:30616"/>
    </ligand>
</feature>
<keyword id="KW-0030">Aminoacyl-tRNA synthetase</keyword>
<keyword id="KW-0067">ATP-binding</keyword>
<keyword id="KW-0963">Cytoplasm</keyword>
<keyword id="KW-0436">Ligase</keyword>
<keyword id="KW-0547">Nucleotide-binding</keyword>
<keyword id="KW-0648">Protein biosynthesis</keyword>
<keyword id="KW-1185">Reference proteome</keyword>
<organism>
    <name type="scientific">Leptospira interrogans serogroup Icterohaemorrhagiae serovar Lai (strain 56601)</name>
    <dbReference type="NCBI Taxonomy" id="189518"/>
    <lineage>
        <taxon>Bacteria</taxon>
        <taxon>Pseudomonadati</taxon>
        <taxon>Spirochaetota</taxon>
        <taxon>Spirochaetia</taxon>
        <taxon>Leptospirales</taxon>
        <taxon>Leptospiraceae</taxon>
        <taxon>Leptospira</taxon>
    </lineage>
</organism>
<proteinExistence type="inferred from homology"/>
<reference key="1">
    <citation type="journal article" date="2003" name="Nature">
        <title>Unique physiological and pathogenic features of Leptospira interrogans revealed by whole-genome sequencing.</title>
        <authorList>
            <person name="Ren S.-X."/>
            <person name="Fu G."/>
            <person name="Jiang X.-G."/>
            <person name="Zeng R."/>
            <person name="Miao Y.-G."/>
            <person name="Xu H."/>
            <person name="Zhang Y.-X."/>
            <person name="Xiong H."/>
            <person name="Lu G."/>
            <person name="Lu L.-F."/>
            <person name="Jiang H.-Q."/>
            <person name="Jia J."/>
            <person name="Tu Y.-F."/>
            <person name="Jiang J.-X."/>
            <person name="Gu W.-Y."/>
            <person name="Zhang Y.-Q."/>
            <person name="Cai Z."/>
            <person name="Sheng H.-H."/>
            <person name="Yin H.-F."/>
            <person name="Zhang Y."/>
            <person name="Zhu G.-F."/>
            <person name="Wan M."/>
            <person name="Huang H.-L."/>
            <person name="Qian Z."/>
            <person name="Wang S.-Y."/>
            <person name="Ma W."/>
            <person name="Yao Z.-J."/>
            <person name="Shen Y."/>
            <person name="Qiang B.-Q."/>
            <person name="Xia Q.-C."/>
            <person name="Guo X.-K."/>
            <person name="Danchin A."/>
            <person name="Saint Girons I."/>
            <person name="Somerville R.L."/>
            <person name="Wen Y.-M."/>
            <person name="Shi M.-H."/>
            <person name="Chen Z."/>
            <person name="Xu J.-G."/>
            <person name="Zhao G.-P."/>
        </authorList>
    </citation>
    <scope>NUCLEOTIDE SEQUENCE [LARGE SCALE GENOMIC DNA]</scope>
    <source>
        <strain>56601</strain>
    </source>
</reference>
<accession>Q8EZY7</accession>
<name>SYL_LEPIN</name>
<comment type="catalytic activity">
    <reaction evidence="1">
        <text>tRNA(Leu) + L-leucine + ATP = L-leucyl-tRNA(Leu) + AMP + diphosphate</text>
        <dbReference type="Rhea" id="RHEA:11688"/>
        <dbReference type="Rhea" id="RHEA-COMP:9613"/>
        <dbReference type="Rhea" id="RHEA-COMP:9622"/>
        <dbReference type="ChEBI" id="CHEBI:30616"/>
        <dbReference type="ChEBI" id="CHEBI:33019"/>
        <dbReference type="ChEBI" id="CHEBI:57427"/>
        <dbReference type="ChEBI" id="CHEBI:78442"/>
        <dbReference type="ChEBI" id="CHEBI:78494"/>
        <dbReference type="ChEBI" id="CHEBI:456215"/>
        <dbReference type="EC" id="6.1.1.4"/>
    </reaction>
</comment>
<comment type="subcellular location">
    <subcellularLocation>
        <location evidence="1">Cytoplasm</location>
    </subcellularLocation>
</comment>
<comment type="similarity">
    <text evidence="1">Belongs to the class-I aminoacyl-tRNA synthetase family.</text>
</comment>